<feature type="signal peptide" evidence="2">
    <location>
        <begin position="1"/>
        <end position="13"/>
    </location>
</feature>
<feature type="chain" id="PRO_0000273564" description="L-amino-acid oxidase BjussuLAAO-I">
    <location>
        <begin position="14"/>
        <end position="497" status="greater than"/>
    </location>
</feature>
<feature type="binding site" evidence="12">
    <location>
        <begin position="56"/>
        <end position="57"/>
    </location>
    <ligand>
        <name>FAD</name>
        <dbReference type="ChEBI" id="CHEBI:57692"/>
    </ligand>
</feature>
<feature type="binding site" evidence="12">
    <location>
        <begin position="76"/>
        <end position="80"/>
    </location>
    <ligand>
        <name>FAD</name>
        <dbReference type="ChEBI" id="CHEBI:57692"/>
    </ligand>
</feature>
<feature type="binding site" evidence="2">
    <location>
        <begin position="76"/>
        <end position="77"/>
    </location>
    <ligand>
        <name>FAD</name>
        <dbReference type="ChEBI" id="CHEBI:57692"/>
    </ligand>
</feature>
<feature type="binding site" evidence="12">
    <location>
        <position position="84"/>
    </location>
    <ligand>
        <name>FAD</name>
        <dbReference type="ChEBI" id="CHEBI:57692"/>
    </ligand>
</feature>
<feature type="binding site" evidence="12">
    <location>
        <begin position="100"/>
        <end position="103"/>
    </location>
    <ligand>
        <name>FAD</name>
        <dbReference type="ChEBI" id="CHEBI:57692"/>
    </ligand>
</feature>
<feature type="binding site" evidence="2">
    <location>
        <position position="103"/>
    </location>
    <ligand>
        <name>substrate</name>
    </ligand>
</feature>
<feature type="binding site" evidence="2">
    <location>
        <position position="236"/>
    </location>
    <ligand>
        <name>substrate</name>
    </ligand>
</feature>
<feature type="binding site" evidence="12">
    <location>
        <position position="274"/>
    </location>
    <ligand>
        <name>FAD</name>
        <dbReference type="ChEBI" id="CHEBI:57692"/>
    </ligand>
</feature>
<feature type="binding site" evidence="2">
    <location>
        <position position="385"/>
    </location>
    <ligand>
        <name>substrate</name>
    </ligand>
</feature>
<feature type="binding site" evidence="12">
    <location>
        <position position="470"/>
    </location>
    <ligand>
        <name>FAD</name>
        <dbReference type="ChEBI" id="CHEBI:57692"/>
    </ligand>
</feature>
<feature type="binding site" evidence="2">
    <location>
        <begin position="477"/>
        <end position="482"/>
    </location>
    <ligand>
        <name>FAD</name>
        <dbReference type="ChEBI" id="CHEBI:57692"/>
    </ligand>
</feature>
<feature type="binding site" evidence="2">
    <location>
        <begin position="477"/>
        <end position="478"/>
    </location>
    <ligand>
        <name>substrate</name>
    </ligand>
</feature>
<feature type="binding site" evidence="12">
    <location>
        <begin position="478"/>
        <end position="482"/>
    </location>
    <ligand>
        <name>FAD</name>
        <dbReference type="ChEBI" id="CHEBI:57692"/>
    </ligand>
</feature>
<feature type="glycosylation site" description="N-linked (GlcNAc...) asparagine" evidence="3">
    <location>
        <position position="185"/>
    </location>
</feature>
<feature type="disulfide bond" evidence="5 12">
    <location>
        <begin position="23"/>
        <end position="186"/>
    </location>
</feature>
<feature type="disulfide bond" evidence="5 12">
    <location>
        <begin position="344"/>
        <end position="425"/>
    </location>
</feature>
<feature type="non-terminal residue" evidence="6">
    <location>
        <position position="497"/>
    </location>
</feature>
<feature type="helix" evidence="13">
    <location>
        <begin position="28"/>
        <end position="38"/>
    </location>
</feature>
<feature type="strand" evidence="13">
    <location>
        <begin position="48"/>
        <end position="51"/>
    </location>
</feature>
<feature type="helix" evidence="13">
    <location>
        <begin position="56"/>
        <end position="67"/>
    </location>
</feature>
<feature type="strand" evidence="13">
    <location>
        <begin position="71"/>
        <end position="76"/>
    </location>
</feature>
<feature type="strand" evidence="13">
    <location>
        <begin position="78"/>
        <end position="81"/>
    </location>
</feature>
<feature type="strand" evidence="13">
    <location>
        <begin position="87"/>
        <end position="90"/>
    </location>
</feature>
<feature type="turn" evidence="13">
    <location>
        <begin position="91"/>
        <end position="94"/>
    </location>
</feature>
<feature type="strand" evidence="13">
    <location>
        <begin position="95"/>
        <end position="98"/>
    </location>
</feature>
<feature type="helix" evidence="13">
    <location>
        <begin position="106"/>
        <end position="108"/>
    </location>
</feature>
<feature type="helix" evidence="13">
    <location>
        <begin position="109"/>
        <end position="116"/>
    </location>
</feature>
<feature type="turn" evidence="13">
    <location>
        <begin position="117"/>
        <end position="119"/>
    </location>
</feature>
<feature type="strand" evidence="13">
    <location>
        <begin position="122"/>
        <end position="124"/>
    </location>
</feature>
<feature type="strand" evidence="13">
    <location>
        <begin position="133"/>
        <end position="136"/>
    </location>
</feature>
<feature type="strand" evidence="13">
    <location>
        <begin position="139"/>
        <end position="142"/>
    </location>
</feature>
<feature type="helix" evidence="13">
    <location>
        <begin position="143"/>
        <end position="148"/>
    </location>
</feature>
<feature type="helix" evidence="13">
    <location>
        <begin position="151"/>
        <end position="153"/>
    </location>
</feature>
<feature type="turn" evidence="13">
    <location>
        <begin position="159"/>
        <end position="163"/>
    </location>
</feature>
<feature type="helix" evidence="13">
    <location>
        <begin position="166"/>
        <end position="172"/>
    </location>
</feature>
<feature type="turn" evidence="13">
    <location>
        <begin position="173"/>
        <end position="177"/>
    </location>
</feature>
<feature type="turn" evidence="13">
    <location>
        <begin position="179"/>
        <end position="184"/>
    </location>
</feature>
<feature type="helix" evidence="13">
    <location>
        <begin position="186"/>
        <end position="194"/>
    </location>
</feature>
<feature type="strand" evidence="13">
    <location>
        <begin position="195"/>
        <end position="197"/>
    </location>
</feature>
<feature type="helix" evidence="13">
    <location>
        <begin position="198"/>
        <end position="203"/>
    </location>
</feature>
<feature type="turn" evidence="13">
    <location>
        <begin position="204"/>
        <end position="206"/>
    </location>
</feature>
<feature type="helix" evidence="13">
    <location>
        <begin position="210"/>
        <end position="219"/>
    </location>
</feature>
<feature type="turn" evidence="13">
    <location>
        <begin position="223"/>
        <end position="227"/>
    </location>
</feature>
<feature type="helix" evidence="13">
    <location>
        <begin position="230"/>
        <end position="240"/>
    </location>
</feature>
<feature type="strand" evidence="13">
    <location>
        <begin position="246"/>
        <end position="249"/>
    </location>
</feature>
<feature type="helix" evidence="13">
    <location>
        <begin position="255"/>
        <end position="263"/>
    </location>
</feature>
<feature type="helix" evidence="13">
    <location>
        <begin position="264"/>
        <end position="267"/>
    </location>
</feature>
<feature type="strand" evidence="13">
    <location>
        <begin position="268"/>
        <end position="271"/>
    </location>
</feature>
<feature type="strand" evidence="13">
    <location>
        <begin position="274"/>
        <end position="279"/>
    </location>
</feature>
<feature type="strand" evidence="13">
    <location>
        <begin position="284"/>
        <end position="289"/>
    </location>
</feature>
<feature type="strand" evidence="13">
    <location>
        <begin position="299"/>
        <end position="305"/>
    </location>
</feature>
<feature type="helix" evidence="13">
    <location>
        <begin position="309"/>
        <end position="313"/>
    </location>
</feature>
<feature type="strand" evidence="13">
    <location>
        <begin position="315"/>
        <end position="319"/>
    </location>
</feature>
<feature type="helix" evidence="13">
    <location>
        <begin position="323"/>
        <end position="331"/>
    </location>
</feature>
<feature type="strand" evidence="13">
    <location>
        <begin position="337"/>
        <end position="346"/>
    </location>
</feature>
<feature type="helix" evidence="13">
    <location>
        <begin position="348"/>
        <end position="350"/>
    </location>
</feature>
<feature type="turn" evidence="13">
    <location>
        <begin position="351"/>
        <end position="353"/>
    </location>
</feature>
<feature type="strand" evidence="13">
    <location>
        <begin position="356"/>
        <end position="363"/>
    </location>
</feature>
<feature type="strand" evidence="13">
    <location>
        <begin position="366"/>
        <end position="370"/>
    </location>
</feature>
<feature type="turn" evidence="13">
    <location>
        <begin position="376"/>
        <end position="378"/>
    </location>
</feature>
<feature type="strand" evidence="13">
    <location>
        <begin position="380"/>
        <end position="387"/>
    </location>
</feature>
<feature type="helix" evidence="13">
    <location>
        <begin position="389"/>
        <end position="392"/>
    </location>
</feature>
<feature type="turn" evidence="13">
    <location>
        <begin position="393"/>
        <end position="396"/>
    </location>
</feature>
<feature type="helix" evidence="13">
    <location>
        <begin position="399"/>
        <end position="413"/>
    </location>
</feature>
<feature type="helix" evidence="13">
    <location>
        <begin position="418"/>
        <end position="423"/>
    </location>
</feature>
<feature type="strand" evidence="13">
    <location>
        <begin position="425"/>
        <end position="433"/>
    </location>
</feature>
<feature type="turn" evidence="13">
    <location>
        <begin position="437"/>
        <end position="439"/>
    </location>
</feature>
<feature type="strand" evidence="13">
    <location>
        <begin position="440"/>
        <end position="444"/>
    </location>
</feature>
<feature type="helix" evidence="13">
    <location>
        <begin position="450"/>
        <end position="459"/>
    </location>
</feature>
<feature type="strand" evidence="13">
    <location>
        <begin position="463"/>
        <end position="467"/>
    </location>
</feature>
<feature type="turn" evidence="13">
    <location>
        <begin position="470"/>
        <end position="472"/>
    </location>
</feature>
<feature type="strand" evidence="13">
    <location>
        <begin position="473"/>
        <end position="477"/>
    </location>
</feature>
<feature type="helix" evidence="13">
    <location>
        <begin position="480"/>
        <end position="483"/>
    </location>
</feature>
<feature type="helix" evidence="13">
    <location>
        <begin position="488"/>
        <end position="495"/>
    </location>
</feature>
<accession>Q6TGQ9</accession>
<dbReference type="EC" id="1.4.3.2" evidence="5"/>
<dbReference type="EMBL" id="AY398691">
    <property type="protein sequence ID" value="AAR31182.1"/>
    <property type="molecule type" value="mRNA"/>
</dbReference>
<dbReference type="PDB" id="4E0V">
    <property type="method" value="X-ray"/>
    <property type="resolution" value="3.10 A"/>
    <property type="chains" value="A/B=18-496"/>
</dbReference>
<dbReference type="PDBsum" id="4E0V"/>
<dbReference type="SMR" id="Q6TGQ9"/>
<dbReference type="BRENDA" id="1.4.3.2">
    <property type="organism ID" value="6809"/>
</dbReference>
<dbReference type="EvolutionaryTrace" id="Q6TGQ9"/>
<dbReference type="GO" id="GO:0005576">
    <property type="term" value="C:extracellular region"/>
    <property type="evidence" value="ECO:0007669"/>
    <property type="project" value="UniProtKB-SubCell"/>
</dbReference>
<dbReference type="GO" id="GO:0106329">
    <property type="term" value="F:L-phenylalaine oxidase activity"/>
    <property type="evidence" value="ECO:0007669"/>
    <property type="project" value="RHEA"/>
</dbReference>
<dbReference type="GO" id="GO:0000166">
    <property type="term" value="F:nucleotide binding"/>
    <property type="evidence" value="ECO:0007669"/>
    <property type="project" value="UniProtKB-KW"/>
</dbReference>
<dbReference type="GO" id="GO:0090729">
    <property type="term" value="F:toxin activity"/>
    <property type="evidence" value="ECO:0007669"/>
    <property type="project" value="UniProtKB-KW"/>
</dbReference>
<dbReference type="GO" id="GO:0009063">
    <property type="term" value="P:amino acid catabolic process"/>
    <property type="evidence" value="ECO:0007669"/>
    <property type="project" value="TreeGrafter"/>
</dbReference>
<dbReference type="GO" id="GO:0006915">
    <property type="term" value="P:apoptotic process"/>
    <property type="evidence" value="ECO:0007669"/>
    <property type="project" value="UniProtKB-KW"/>
</dbReference>
<dbReference type="GO" id="GO:0042742">
    <property type="term" value="P:defense response to bacterium"/>
    <property type="evidence" value="ECO:0007669"/>
    <property type="project" value="UniProtKB-KW"/>
</dbReference>
<dbReference type="GO" id="GO:0031640">
    <property type="term" value="P:killing of cells of another organism"/>
    <property type="evidence" value="ECO:0007669"/>
    <property type="project" value="UniProtKB-KW"/>
</dbReference>
<dbReference type="FunFam" id="1.10.405.10:FF:000004">
    <property type="entry name" value="Amine oxidase"/>
    <property type="match status" value="1"/>
</dbReference>
<dbReference type="FunFam" id="3.50.50.60:FF:000450">
    <property type="entry name" value="Amine oxidase"/>
    <property type="match status" value="1"/>
</dbReference>
<dbReference type="Gene3D" id="3.90.660.10">
    <property type="match status" value="1"/>
</dbReference>
<dbReference type="Gene3D" id="3.50.50.60">
    <property type="entry name" value="FAD/NAD(P)-binding domain"/>
    <property type="match status" value="1"/>
</dbReference>
<dbReference type="Gene3D" id="1.10.405.10">
    <property type="entry name" value="Guanine Nucleotide Dissociation Inhibitor, domain 1"/>
    <property type="match status" value="1"/>
</dbReference>
<dbReference type="InterPro" id="IPR002937">
    <property type="entry name" value="Amino_oxidase"/>
</dbReference>
<dbReference type="InterPro" id="IPR036188">
    <property type="entry name" value="FAD/NAD-bd_sf"/>
</dbReference>
<dbReference type="InterPro" id="IPR001613">
    <property type="entry name" value="Flavin_amine_oxidase"/>
</dbReference>
<dbReference type="InterPro" id="IPR050281">
    <property type="entry name" value="Flavin_monoamine_oxidase"/>
</dbReference>
<dbReference type="PANTHER" id="PTHR10742:SF355">
    <property type="entry name" value="AMINE OXIDASE"/>
    <property type="match status" value="1"/>
</dbReference>
<dbReference type="PANTHER" id="PTHR10742">
    <property type="entry name" value="FLAVIN MONOAMINE OXIDASE"/>
    <property type="match status" value="1"/>
</dbReference>
<dbReference type="Pfam" id="PF01593">
    <property type="entry name" value="Amino_oxidase"/>
    <property type="match status" value="1"/>
</dbReference>
<dbReference type="PRINTS" id="PR00757">
    <property type="entry name" value="AMINEOXDASEF"/>
</dbReference>
<dbReference type="SUPFAM" id="SSF54373">
    <property type="entry name" value="FAD-linked reductases, C-terminal domain"/>
    <property type="match status" value="1"/>
</dbReference>
<dbReference type="SUPFAM" id="SSF51905">
    <property type="entry name" value="FAD/NAD(P)-binding domain"/>
    <property type="match status" value="1"/>
</dbReference>
<protein>
    <recommendedName>
        <fullName evidence="6">L-amino-acid oxidase BjussuLAAO-I</fullName>
        <shortName evidence="7">BjsuLAAO</shortName>
        <shortName>LAO</shortName>
        <ecNumber evidence="5">1.4.3.2</ecNumber>
    </recommendedName>
</protein>
<proteinExistence type="evidence at protein level"/>
<sequence>MNVFFMFSKPGKLADDRNPLEECFRETDYEEFLEIAKNGLSTTSNPKRVVIVGAGMSGLSAAYVLANAGHQVTVLEASERAGGQVKTYRNEKEGWYANLGPMRLPEKHRIVREYIRKFGLQLNEFSQENENAWYFIKNIRKRVGEVNKDPGVLDYPVKPSEVGKSAGQLYEESLQKAVEELRRTNCSYMLNKYDTYSTKEYLLKEGNLSPGAVDMIGDLLNEDSGYYVSFIESLKHDDIFAYEKRFDEIVGGMDKLPTSMYQAIQEKVHLNARVIKIQQDVKEVTVTYQTSEKETLSVTADYVIVCTTSRAARRIKFEPPLPPKKAHALRSVHYRSGTKIFLTCTKKFWEDDGIHGGKSTTDLPSRFIYYPNHNFPNGVGVIIAYGIGDDANYFEALDFEDCGDIVINDLSLIHQLPKEEIQAICRPSMIQRWSLDKYAMGGITTFTPYQFQHFSEALTAPVDRIYFAGEYTAQAHGWIASTIKSGPEGLDVNRASE</sequence>
<reference evidence="10" key="1">
    <citation type="journal article" date="2007" name="Biochem. Biophys. Res. Commun.">
        <title>Molecular approaches for structural characterization of Bothrops L-amino acid oxidases with antiprotozoal activity: cDNA cloning, comparative sequence analysis, and molecular modeling.</title>
        <authorList>
            <person name="Franca S.C."/>
            <person name="Kashima S."/>
            <person name="Roberto P.G."/>
            <person name="Marins M."/>
            <person name="Ticli F.K."/>
            <person name="Pereira J.O."/>
            <person name="Astolfi-Filho S."/>
            <person name="Stabeli R.G."/>
            <person name="Magro A.J."/>
            <person name="Fontes M.R."/>
            <person name="Sampaio S.V."/>
            <person name="Soares A.M."/>
        </authorList>
    </citation>
    <scope>NUCLEOTIDE SEQUENCE [MRNA]</scope>
    <scope>FUNCTION</scope>
    <source>
        <tissue>Venom gland</tissue>
    </source>
</reference>
<reference evidence="11" key="2">
    <citation type="journal article" date="2012" name="Biochem. Biophys. Res. Commun.">
        <title>Structural insights into selectivity and cofactor binding in snake venom L-amino acid oxidases.</title>
        <authorList>
            <person name="Ullah A."/>
            <person name="Souza T.A."/>
            <person name="Abrego J.R."/>
            <person name="Betzel C."/>
            <person name="Murakami M.T."/>
            <person name="Arni R.K."/>
        </authorList>
    </citation>
    <scope>X-RAY CRYSTALLOGRAPHY (3.10 ANGSTROMS) OF 18-496 IN COMPLEX WITH FAD</scope>
    <scope>DISULFIDE BOND</scope>
    <scope>COFACTOR</scope>
    <scope>FUNCTION</scope>
    <scope>CATALYTIC ACTIVITY</scope>
    <scope>SUBUNIT</scope>
    <scope>SUBCELLULAR LOCATION</scope>
    <scope>SUBSTRATE SPECIFICITY</scope>
    <source>
        <tissue>Venom</tissue>
    </source>
</reference>
<evidence type="ECO:0000250" key="1">
    <source>
        <dbReference type="UniProtKB" id="P0CC17"/>
    </source>
</evidence>
<evidence type="ECO:0000250" key="2">
    <source>
        <dbReference type="UniProtKB" id="P81382"/>
    </source>
</evidence>
<evidence type="ECO:0000255" key="3"/>
<evidence type="ECO:0000269" key="4">
    <source>
    </source>
</evidence>
<evidence type="ECO:0000269" key="5">
    <source>
    </source>
</evidence>
<evidence type="ECO:0000303" key="6">
    <source>
    </source>
</evidence>
<evidence type="ECO:0000303" key="7">
    <source>
    </source>
</evidence>
<evidence type="ECO:0000305" key="8"/>
<evidence type="ECO:0000305" key="9">
    <source>
    </source>
</evidence>
<evidence type="ECO:0000312" key="10">
    <source>
        <dbReference type="EMBL" id="AAR31182.1"/>
    </source>
</evidence>
<evidence type="ECO:0000312" key="11">
    <source>
        <dbReference type="PDB" id="4E0V"/>
    </source>
</evidence>
<evidence type="ECO:0007744" key="12">
    <source>
        <dbReference type="PDB" id="4E0V"/>
    </source>
</evidence>
<evidence type="ECO:0007829" key="13">
    <source>
        <dbReference type="PDB" id="4E0V"/>
    </source>
</evidence>
<keyword id="KW-0002">3D-structure</keyword>
<keyword id="KW-0044">Antibiotic</keyword>
<keyword id="KW-0929">Antimicrobial</keyword>
<keyword id="KW-0053">Apoptosis</keyword>
<keyword id="KW-0204">Cytolysis</keyword>
<keyword id="KW-1015">Disulfide bond</keyword>
<keyword id="KW-0274">FAD</keyword>
<keyword id="KW-0285">Flavoprotein</keyword>
<keyword id="KW-0325">Glycoprotein</keyword>
<keyword id="KW-0354">Hemolysis</keyword>
<keyword id="KW-1199">Hemostasis impairing toxin</keyword>
<keyword id="KW-0547">Nucleotide-binding</keyword>
<keyword id="KW-0560">Oxidoreductase</keyword>
<keyword id="KW-0964">Secreted</keyword>
<keyword id="KW-0732">Signal</keyword>
<keyword id="KW-0800">Toxin</keyword>
<comment type="function">
    <text evidence="1 4 5">Catalyzes an oxidative deamination of predominantly hydrophobic and aromatic L-amino acids, thus producing hydrogen peroxide that may contribute to the diverse toxic effects of this enzyme (PubMed:22490662). Shows high specificity for L-Met, L-Leu, L-Phe, L-Tyr, L-Ile, L-Trp, a moderate activity on L-Cys and low activity on L-Val, L-Lys, L-Arg, L-His, L-Gln, L-Thr and L-Ser (PubMed:22490662). Exhibits diverse biological activities, such as hemorrhage, hemolysis, edema, apoptosis of vascular endothelial cells or tumor cell lines, and antibacterial, as well as regulation of platelet aggregation (By similarity). Effects of snake L-amino oxidases on platelets are controversial, since they either induce aggregation or inhibit agonist-induced aggregation (By similarity). These different effects are probably due to different experimental conditions (By similarity). In vitro, shows parasiticidal activities against both trypanosomes and leishmania, as a result of enzyme-catalyzed hydrogen peroxide production (PubMed:17292326).</text>
</comment>
<comment type="catalytic activity">
    <reaction evidence="5">
        <text>an L-alpha-amino acid + O2 + H2O = a 2-oxocarboxylate + H2O2 + NH4(+)</text>
        <dbReference type="Rhea" id="RHEA:13781"/>
        <dbReference type="ChEBI" id="CHEBI:15377"/>
        <dbReference type="ChEBI" id="CHEBI:15379"/>
        <dbReference type="ChEBI" id="CHEBI:16240"/>
        <dbReference type="ChEBI" id="CHEBI:28938"/>
        <dbReference type="ChEBI" id="CHEBI:35179"/>
        <dbReference type="ChEBI" id="CHEBI:59869"/>
        <dbReference type="EC" id="1.4.3.2"/>
    </reaction>
</comment>
<comment type="catalytic activity">
    <reaction evidence="5">
        <text>L-leucine + O2 + H2O = 4-methyl-2-oxopentanoate + H2O2 + NH4(+)</text>
        <dbReference type="Rhea" id="RHEA:60996"/>
        <dbReference type="ChEBI" id="CHEBI:15377"/>
        <dbReference type="ChEBI" id="CHEBI:15379"/>
        <dbReference type="ChEBI" id="CHEBI:16240"/>
        <dbReference type="ChEBI" id="CHEBI:17865"/>
        <dbReference type="ChEBI" id="CHEBI:28938"/>
        <dbReference type="ChEBI" id="CHEBI:57427"/>
    </reaction>
</comment>
<comment type="catalytic activity">
    <reaction evidence="5">
        <text>L-phenylalanine + O2 + H2O = 3-phenylpyruvate + H2O2 + NH4(+)</text>
        <dbReference type="Rhea" id="RHEA:61240"/>
        <dbReference type="ChEBI" id="CHEBI:15377"/>
        <dbReference type="ChEBI" id="CHEBI:15379"/>
        <dbReference type="ChEBI" id="CHEBI:16240"/>
        <dbReference type="ChEBI" id="CHEBI:18005"/>
        <dbReference type="ChEBI" id="CHEBI:28938"/>
        <dbReference type="ChEBI" id="CHEBI:58095"/>
    </reaction>
</comment>
<comment type="catalytic activity">
    <reaction evidence="5">
        <text>L-tryptophan + O2 + H2O = indole-3-pyruvate + H2O2 + NH4(+)</text>
        <dbReference type="Rhea" id="RHEA:61244"/>
        <dbReference type="ChEBI" id="CHEBI:15377"/>
        <dbReference type="ChEBI" id="CHEBI:15379"/>
        <dbReference type="ChEBI" id="CHEBI:16240"/>
        <dbReference type="ChEBI" id="CHEBI:17640"/>
        <dbReference type="ChEBI" id="CHEBI:28938"/>
        <dbReference type="ChEBI" id="CHEBI:57912"/>
    </reaction>
</comment>
<comment type="catalytic activity">
    <reaction evidence="5">
        <text>L-methionine + O2 + H2O = 4-methylsulfanyl-2-oxobutanoate + H2O2 + NH4(+)</text>
        <dbReference type="Rhea" id="RHEA:61236"/>
        <dbReference type="ChEBI" id="CHEBI:15377"/>
        <dbReference type="ChEBI" id="CHEBI:15379"/>
        <dbReference type="ChEBI" id="CHEBI:16240"/>
        <dbReference type="ChEBI" id="CHEBI:16723"/>
        <dbReference type="ChEBI" id="CHEBI:28938"/>
        <dbReference type="ChEBI" id="CHEBI:57844"/>
    </reaction>
</comment>
<comment type="catalytic activity">
    <reaction evidence="5">
        <text>L-isoleucine + O2 + H2O = (S)-3-methyl-2-oxopentanoate + H2O2 + NH4(+)</text>
        <dbReference type="Rhea" id="RHEA:61232"/>
        <dbReference type="ChEBI" id="CHEBI:15377"/>
        <dbReference type="ChEBI" id="CHEBI:15379"/>
        <dbReference type="ChEBI" id="CHEBI:16240"/>
        <dbReference type="ChEBI" id="CHEBI:28938"/>
        <dbReference type="ChEBI" id="CHEBI:35146"/>
        <dbReference type="ChEBI" id="CHEBI:58045"/>
    </reaction>
</comment>
<comment type="catalytic activity">
    <reaction evidence="5">
        <text>L-tyrosine + O2 + H2O = 3-(4-hydroxyphenyl)pyruvate + H2O2 + NH4(+)</text>
        <dbReference type="Rhea" id="RHEA:61248"/>
        <dbReference type="ChEBI" id="CHEBI:15377"/>
        <dbReference type="ChEBI" id="CHEBI:15379"/>
        <dbReference type="ChEBI" id="CHEBI:16240"/>
        <dbReference type="ChEBI" id="CHEBI:28938"/>
        <dbReference type="ChEBI" id="CHEBI:36242"/>
        <dbReference type="ChEBI" id="CHEBI:58315"/>
    </reaction>
</comment>
<comment type="catalytic activity">
    <reaction evidence="5">
        <text>L-cysteine + O2 + H2O = 2-oxo-3-sulfanylpropanoate + H2O2 + NH4(+)</text>
        <dbReference type="Rhea" id="RHEA:61256"/>
        <dbReference type="ChEBI" id="CHEBI:15377"/>
        <dbReference type="ChEBI" id="CHEBI:15379"/>
        <dbReference type="ChEBI" id="CHEBI:16240"/>
        <dbReference type="ChEBI" id="CHEBI:28938"/>
        <dbReference type="ChEBI" id="CHEBI:35235"/>
        <dbReference type="ChEBI" id="CHEBI:57678"/>
    </reaction>
</comment>
<comment type="cofactor">
    <cofactor evidence="5">
        <name>FAD</name>
        <dbReference type="ChEBI" id="CHEBI:57692"/>
    </cofactor>
</comment>
<comment type="subunit">
    <text evidence="5">Homodimer; non-covalently linked.</text>
</comment>
<comment type="subcellular location">
    <subcellularLocation>
        <location evidence="5">Secreted</location>
    </subcellularLocation>
</comment>
<comment type="tissue specificity">
    <text evidence="9">Expressed by the venom gland.</text>
</comment>
<comment type="similarity">
    <text evidence="8">Belongs to the flavin monoamine oxidase family. FIG1 subfamily.</text>
</comment>
<name>OXLA1_BOTJR</name>
<organism>
    <name type="scientific">Bothrops jararacussu</name>
    <name type="common">Jararacussu</name>
    <dbReference type="NCBI Taxonomy" id="8726"/>
    <lineage>
        <taxon>Eukaryota</taxon>
        <taxon>Metazoa</taxon>
        <taxon>Chordata</taxon>
        <taxon>Craniata</taxon>
        <taxon>Vertebrata</taxon>
        <taxon>Euteleostomi</taxon>
        <taxon>Lepidosauria</taxon>
        <taxon>Squamata</taxon>
        <taxon>Bifurcata</taxon>
        <taxon>Unidentata</taxon>
        <taxon>Episquamata</taxon>
        <taxon>Toxicofera</taxon>
        <taxon>Serpentes</taxon>
        <taxon>Colubroidea</taxon>
        <taxon>Viperidae</taxon>
        <taxon>Crotalinae</taxon>
        <taxon>Bothrops</taxon>
    </lineage>
</organism>